<reference key="1">
    <citation type="journal article" date="2003" name="Proc. Natl. Acad. Sci. U.S.A.">
        <title>Complete genome sequence and analysis of Wolinella succinogenes.</title>
        <authorList>
            <person name="Baar C."/>
            <person name="Eppinger M."/>
            <person name="Raddatz G."/>
            <person name="Simon J."/>
            <person name="Lanz C."/>
            <person name="Klimmek O."/>
            <person name="Nandakumar R."/>
            <person name="Gross R."/>
            <person name="Rosinus A."/>
            <person name="Keller H."/>
            <person name="Jagtap P."/>
            <person name="Linke B."/>
            <person name="Meyer F."/>
            <person name="Lederer H."/>
            <person name="Schuster S.C."/>
        </authorList>
    </citation>
    <scope>NUCLEOTIDE SEQUENCE [LARGE SCALE GENOMIC DNA]</scope>
    <source>
        <strain>ATCC 29543 / DSM 1740 / CCUG 13145 / JCM 31913 / LMG 7466 / NCTC 11488 / FDC 602W</strain>
    </source>
</reference>
<accession>Q7MSD9</accession>
<dbReference type="EMBL" id="BX571658">
    <property type="protein sequence ID" value="CAE09682.1"/>
    <property type="molecule type" value="Genomic_DNA"/>
</dbReference>
<dbReference type="RefSeq" id="WP_011138482.1">
    <property type="nucleotide sequence ID" value="NC_005090.1"/>
</dbReference>
<dbReference type="SMR" id="Q7MSD9"/>
<dbReference type="STRING" id="273121.WS0548"/>
<dbReference type="KEGG" id="wsu:WS0548"/>
<dbReference type="eggNOG" id="COG0228">
    <property type="taxonomic scope" value="Bacteria"/>
</dbReference>
<dbReference type="HOGENOM" id="CLU_100590_5_1_7"/>
<dbReference type="Proteomes" id="UP000000422">
    <property type="component" value="Chromosome"/>
</dbReference>
<dbReference type="GO" id="GO:0005737">
    <property type="term" value="C:cytoplasm"/>
    <property type="evidence" value="ECO:0007669"/>
    <property type="project" value="UniProtKB-ARBA"/>
</dbReference>
<dbReference type="GO" id="GO:0015935">
    <property type="term" value="C:small ribosomal subunit"/>
    <property type="evidence" value="ECO:0007669"/>
    <property type="project" value="TreeGrafter"/>
</dbReference>
<dbReference type="GO" id="GO:0003735">
    <property type="term" value="F:structural constituent of ribosome"/>
    <property type="evidence" value="ECO:0007669"/>
    <property type="project" value="InterPro"/>
</dbReference>
<dbReference type="GO" id="GO:0006412">
    <property type="term" value="P:translation"/>
    <property type="evidence" value="ECO:0007669"/>
    <property type="project" value="UniProtKB-UniRule"/>
</dbReference>
<dbReference type="Gene3D" id="3.30.1320.10">
    <property type="match status" value="1"/>
</dbReference>
<dbReference type="HAMAP" id="MF_00385">
    <property type="entry name" value="Ribosomal_bS16"/>
    <property type="match status" value="1"/>
</dbReference>
<dbReference type="InterPro" id="IPR000307">
    <property type="entry name" value="Ribosomal_bS16"/>
</dbReference>
<dbReference type="InterPro" id="IPR020592">
    <property type="entry name" value="Ribosomal_bS16_CS"/>
</dbReference>
<dbReference type="InterPro" id="IPR023803">
    <property type="entry name" value="Ribosomal_bS16_dom_sf"/>
</dbReference>
<dbReference type="NCBIfam" id="TIGR00002">
    <property type="entry name" value="S16"/>
    <property type="match status" value="1"/>
</dbReference>
<dbReference type="PANTHER" id="PTHR12919">
    <property type="entry name" value="30S RIBOSOMAL PROTEIN S16"/>
    <property type="match status" value="1"/>
</dbReference>
<dbReference type="PANTHER" id="PTHR12919:SF20">
    <property type="entry name" value="SMALL RIBOSOMAL SUBUNIT PROTEIN BS16M"/>
    <property type="match status" value="1"/>
</dbReference>
<dbReference type="Pfam" id="PF00886">
    <property type="entry name" value="Ribosomal_S16"/>
    <property type="match status" value="1"/>
</dbReference>
<dbReference type="SUPFAM" id="SSF54565">
    <property type="entry name" value="Ribosomal protein S16"/>
    <property type="match status" value="1"/>
</dbReference>
<dbReference type="PROSITE" id="PS00732">
    <property type="entry name" value="RIBOSOMAL_S16"/>
    <property type="match status" value="1"/>
</dbReference>
<feature type="chain" id="PRO_0000167284" description="Small ribosomal subunit protein bS16">
    <location>
        <begin position="1"/>
        <end position="77"/>
    </location>
</feature>
<protein>
    <recommendedName>
        <fullName evidence="1">Small ribosomal subunit protein bS16</fullName>
    </recommendedName>
    <alternativeName>
        <fullName evidence="2">30S ribosomal protein S16</fullName>
    </alternativeName>
</protein>
<keyword id="KW-1185">Reference proteome</keyword>
<keyword id="KW-0687">Ribonucleoprotein</keyword>
<keyword id="KW-0689">Ribosomal protein</keyword>
<organism>
    <name type="scientific">Wolinella succinogenes (strain ATCC 29543 / DSM 1740 / CCUG 13145 / JCM 31913 / LMG 7466 / NCTC 11488 / FDC 602W)</name>
    <name type="common">Vibrio succinogenes</name>
    <dbReference type="NCBI Taxonomy" id="273121"/>
    <lineage>
        <taxon>Bacteria</taxon>
        <taxon>Pseudomonadati</taxon>
        <taxon>Campylobacterota</taxon>
        <taxon>Epsilonproteobacteria</taxon>
        <taxon>Campylobacterales</taxon>
        <taxon>Helicobacteraceae</taxon>
        <taxon>Wolinella</taxon>
    </lineage>
</organism>
<sequence>MATVIRLTRLGRKKKPFYRMVVTDSRKRRDGGWVEAIGYYNPLAETPVVKFDAERLKYWVSVGAKMSDRVATLTASK</sequence>
<proteinExistence type="inferred from homology"/>
<evidence type="ECO:0000255" key="1">
    <source>
        <dbReference type="HAMAP-Rule" id="MF_00385"/>
    </source>
</evidence>
<evidence type="ECO:0000305" key="2"/>
<name>RS16_WOLSU</name>
<gene>
    <name evidence="1" type="primary">rpsP</name>
    <name type="ordered locus">WS0548</name>
</gene>
<comment type="similarity">
    <text evidence="1">Belongs to the bacterial ribosomal protein bS16 family.</text>
</comment>